<protein>
    <recommendedName>
        <fullName evidence="8">L-2-hydroxycarboxylate dehydrogenase (NAD(P)(+))</fullName>
        <ecNumber evidence="2 3 6">1.1.1.375</ecNumber>
    </recommendedName>
    <alternativeName>
        <fullName evidence="7">MdhII</fullName>
    </alternativeName>
</protein>
<gene>
    <name type="primary">mdh</name>
    <name type="synonym">mdhB</name>
    <name type="ordered locus">MJ0490</name>
</gene>
<organism>
    <name type="scientific">Methanocaldococcus jannaschii (strain ATCC 43067 / DSM 2661 / JAL-1 / JCM 10045 / NBRC 100440)</name>
    <name type="common">Methanococcus jannaschii</name>
    <dbReference type="NCBI Taxonomy" id="243232"/>
    <lineage>
        <taxon>Archaea</taxon>
        <taxon>Methanobacteriati</taxon>
        <taxon>Methanobacteriota</taxon>
        <taxon>Methanomada group</taxon>
        <taxon>Methanococci</taxon>
        <taxon>Methanococcales</taxon>
        <taxon>Methanocaldococcaceae</taxon>
        <taxon>Methanocaldococcus</taxon>
    </lineage>
</organism>
<dbReference type="EC" id="1.1.1.375" evidence="2 3 6"/>
<dbReference type="EMBL" id="L77117">
    <property type="protein sequence ID" value="AAB98481.1"/>
    <property type="molecule type" value="Genomic_DNA"/>
</dbReference>
<dbReference type="PIR" id="B64361">
    <property type="entry name" value="B64361"/>
</dbReference>
<dbReference type="RefSeq" id="WP_010869991.1">
    <property type="nucleotide sequence ID" value="NC_000909.1"/>
</dbReference>
<dbReference type="PDB" id="1HYE">
    <property type="method" value="X-ray"/>
    <property type="resolution" value="1.90 A"/>
    <property type="chains" value="A=1-313"/>
</dbReference>
<dbReference type="PDB" id="1HYG">
    <property type="method" value="X-ray"/>
    <property type="resolution" value="2.80 A"/>
    <property type="chains" value="A/B=1-313"/>
</dbReference>
<dbReference type="PDBsum" id="1HYE"/>
<dbReference type="PDBsum" id="1HYG"/>
<dbReference type="SMR" id="Q60176"/>
<dbReference type="FunCoup" id="Q60176">
    <property type="interactions" value="140"/>
</dbReference>
<dbReference type="STRING" id="243232.MJ_0490"/>
<dbReference type="PaxDb" id="243232-MJ_0490"/>
<dbReference type="EnsemblBacteria" id="AAB98481">
    <property type="protein sequence ID" value="AAB98481"/>
    <property type="gene ID" value="MJ_0490"/>
</dbReference>
<dbReference type="GeneID" id="1451352"/>
<dbReference type="KEGG" id="mja:MJ_0490"/>
<dbReference type="eggNOG" id="arCOG00246">
    <property type="taxonomic scope" value="Archaea"/>
</dbReference>
<dbReference type="HOGENOM" id="CLU_045401_2_2_2"/>
<dbReference type="InParanoid" id="Q60176"/>
<dbReference type="OrthoDB" id="2596at2157"/>
<dbReference type="PhylomeDB" id="Q60176"/>
<dbReference type="BioCyc" id="MetaCyc:MONOMER-18778"/>
<dbReference type="BRENDA" id="1.1.1.375">
    <property type="organism ID" value="3260"/>
</dbReference>
<dbReference type="SABIO-RK" id="Q60176"/>
<dbReference type="EvolutionaryTrace" id="Q60176"/>
<dbReference type="Proteomes" id="UP000000805">
    <property type="component" value="Chromosome"/>
</dbReference>
<dbReference type="GO" id="GO:0005737">
    <property type="term" value="C:cytoplasm"/>
    <property type="evidence" value="ECO:0007669"/>
    <property type="project" value="UniProtKB-SubCell"/>
</dbReference>
<dbReference type="GO" id="GO:0102443">
    <property type="term" value="F:L-2-hydroxycarboxylate dehydrogenase (NAD+) activity"/>
    <property type="evidence" value="ECO:0007669"/>
    <property type="project" value="RHEA"/>
</dbReference>
<dbReference type="GO" id="GO:0004459">
    <property type="term" value="F:L-lactate dehydrogenase activity"/>
    <property type="evidence" value="ECO:0000318"/>
    <property type="project" value="GO_Central"/>
</dbReference>
<dbReference type="GO" id="GO:0006089">
    <property type="term" value="P:lactate metabolic process"/>
    <property type="evidence" value="ECO:0000318"/>
    <property type="project" value="GO_Central"/>
</dbReference>
<dbReference type="GO" id="GO:0006090">
    <property type="term" value="P:pyruvate metabolic process"/>
    <property type="evidence" value="ECO:0000318"/>
    <property type="project" value="GO_Central"/>
</dbReference>
<dbReference type="GO" id="GO:0006099">
    <property type="term" value="P:tricarboxylic acid cycle"/>
    <property type="evidence" value="ECO:0007669"/>
    <property type="project" value="UniProtKB-KW"/>
</dbReference>
<dbReference type="CDD" id="cd05294">
    <property type="entry name" value="LDH-like_MDH_nadp"/>
    <property type="match status" value="1"/>
</dbReference>
<dbReference type="Gene3D" id="3.90.110.10">
    <property type="entry name" value="Lactate dehydrogenase/glycoside hydrolase, family 4, C-terminal"/>
    <property type="match status" value="1"/>
</dbReference>
<dbReference type="Gene3D" id="3.40.50.720">
    <property type="entry name" value="NAD(P)-binding Rossmann-like Domain"/>
    <property type="match status" value="1"/>
</dbReference>
<dbReference type="InterPro" id="IPR001557">
    <property type="entry name" value="L-lactate/malate_DH"/>
</dbReference>
<dbReference type="InterPro" id="IPR018177">
    <property type="entry name" value="L-lactate_DH_AS"/>
</dbReference>
<dbReference type="InterPro" id="IPR022383">
    <property type="entry name" value="Lactate/malate_DH_C"/>
</dbReference>
<dbReference type="InterPro" id="IPR001236">
    <property type="entry name" value="Lactate/malate_DH_N"/>
</dbReference>
<dbReference type="InterPro" id="IPR015955">
    <property type="entry name" value="Lactate_DH/Glyco_Ohase_4_C"/>
</dbReference>
<dbReference type="InterPro" id="IPR036291">
    <property type="entry name" value="NAD(P)-bd_dom_sf"/>
</dbReference>
<dbReference type="NCBIfam" id="NF004863">
    <property type="entry name" value="PRK06223.1"/>
    <property type="match status" value="1"/>
</dbReference>
<dbReference type="PANTHER" id="PTHR43128">
    <property type="entry name" value="L-2-HYDROXYCARBOXYLATE DEHYDROGENASE (NAD(P)(+))"/>
    <property type="match status" value="1"/>
</dbReference>
<dbReference type="PANTHER" id="PTHR43128:SF16">
    <property type="entry name" value="L-LACTATE DEHYDROGENASE"/>
    <property type="match status" value="1"/>
</dbReference>
<dbReference type="Pfam" id="PF02866">
    <property type="entry name" value="Ldh_1_C"/>
    <property type="match status" value="1"/>
</dbReference>
<dbReference type="Pfam" id="PF00056">
    <property type="entry name" value="Ldh_1_N"/>
    <property type="match status" value="1"/>
</dbReference>
<dbReference type="PIRSF" id="PIRSF000102">
    <property type="entry name" value="Lac_mal_DH"/>
    <property type="match status" value="1"/>
</dbReference>
<dbReference type="PRINTS" id="PR00086">
    <property type="entry name" value="LLDHDRGNASE"/>
</dbReference>
<dbReference type="SUPFAM" id="SSF56327">
    <property type="entry name" value="LDH C-terminal domain-like"/>
    <property type="match status" value="1"/>
</dbReference>
<dbReference type="SUPFAM" id="SSF51735">
    <property type="entry name" value="NAD(P)-binding Rossmann-fold domains"/>
    <property type="match status" value="1"/>
</dbReference>
<keyword id="KW-0002">3D-structure</keyword>
<keyword id="KW-0963">Cytoplasm</keyword>
<keyword id="KW-0520">NAD</keyword>
<keyword id="KW-0521">NADP</keyword>
<keyword id="KW-0560">Oxidoreductase</keyword>
<keyword id="KW-1185">Reference proteome</keyword>
<keyword id="KW-0816">Tricarboxylic acid cycle</keyword>
<comment type="function">
    <text evidence="2 3 6">Catalyzes the reversible oxidation of (S)-malate and (S)-sulfolactate to oxaloacetate and sulfopyruvate, respectively. Can use both NADH and NADPH, although activity is higher with NADPH. Oxidation of (S)-sulfolactate is observed only in the presence of NADP(+). Can also oxidize tartrate. Cannot reduce pyruvate, nor alpha-ketoglutarate.</text>
</comment>
<comment type="catalytic activity">
    <reaction evidence="2 3 6">
        <text>a (2S)-2-hydroxycarboxylate + NAD(+) = a 2-oxocarboxylate + NADH + H(+)</text>
        <dbReference type="Rhea" id="RHEA:34555"/>
        <dbReference type="ChEBI" id="CHEBI:15378"/>
        <dbReference type="ChEBI" id="CHEBI:35179"/>
        <dbReference type="ChEBI" id="CHEBI:57540"/>
        <dbReference type="ChEBI" id="CHEBI:57945"/>
        <dbReference type="ChEBI" id="CHEBI:58123"/>
        <dbReference type="EC" id="1.1.1.375"/>
    </reaction>
</comment>
<comment type="catalytic activity">
    <reaction evidence="2 3 6">
        <text>a (2S)-2-hydroxycarboxylate + NADP(+) = a 2-oxocarboxylate + NADPH + H(+)</text>
        <dbReference type="Rhea" id="RHEA:42768"/>
        <dbReference type="ChEBI" id="CHEBI:15378"/>
        <dbReference type="ChEBI" id="CHEBI:35179"/>
        <dbReference type="ChEBI" id="CHEBI:57783"/>
        <dbReference type="ChEBI" id="CHEBI:58123"/>
        <dbReference type="ChEBI" id="CHEBI:58349"/>
        <dbReference type="EC" id="1.1.1.375"/>
    </reaction>
</comment>
<comment type="biophysicochemical properties">
    <kinetics>
        <KM evidence="2">0.15 mM for (S)-malate (in the presence of NAD(+))</KM>
        <KM evidence="6">0.41 mM for (S)-malate (in the presence of NAD(+))</KM>
        <KM evidence="2">0.025 mM for (S)-malate (in the presence of NADP(+))</KM>
        <KM evidence="6">0.084 mM for (S)-malate (in the presence of NADP(+))</KM>
        <KM evidence="2">4.6 mM for (S)-sulfolactate (in the presence of NADP(+))</KM>
        <KM evidence="6">11 mM for (2S,3S)-tartrate (in the presence of NAD(+))</KM>
        <KM evidence="6">5.1 mM for (2S,3S)-tartrate (in the presence of NADP(+))</KM>
        <KM evidence="2">0.25 mM for oxaloacetate (in the presence of NADH)</KM>
        <KM evidence="2">0.3 mM for oxaloacetate (in the presence of NADPH)</KM>
        <KM evidence="2">1.3 mM for sulfopyruvate (in the presence of NADH)</KM>
        <KM evidence="2">0.19 mM for sulfopyruvate (in the presence of NADPH)</KM>
        <KM evidence="3">0.14 mM for NADH</KM>
        <KM evidence="3">0.02 mM for NADPH</KM>
        <Vmax evidence="2">0.6 umol/min/mg enzyme toward (S)-malate (in the presence of NAD(+))</Vmax>
        <Vmax evidence="2">3.0 umol/min/mg enzyme toward (S)-malate (in the presence of NADP(+))</Vmax>
        <Vmax evidence="2">3.0 umol/min/mg enzyme toward (S)-sulfolactate (in the presence of NADP(+))</Vmax>
        <Vmax evidence="2">29.0 umol/min/mg enzyme toward oxaloacetate (in the presence of NADH)</Vmax>
        <Vmax evidence="2">49.0 umol/min/mg enzyme toward oxaloacetate (in the presence of NADPH)</Vmax>
        <Vmax evidence="2">43.0 umol/min/mg enzyme toward sulfopyruvate (in the presence of NADH)</Vmax>
        <Vmax evidence="2">69.0 umol/min/mg enzyme toward sulfopyruvate (in the presence of NADPH)</Vmax>
        <text evidence="6">kcat is 0.33 sec(-1) for NAD-dependent malate oxidation. kcat is 0.069 sec(-1) for NADP-dependent malate oxidation.</text>
    </kinetics>
</comment>
<comment type="subunit">
    <text evidence="3 4 5">Homotetramer.</text>
</comment>
<comment type="subcellular location">
    <subcellularLocation>
        <location>Cytoplasm</location>
    </subcellularLocation>
</comment>
<comment type="similarity">
    <text evidence="8">Belongs to the LDH/MDH superfamily.</text>
</comment>
<proteinExistence type="evidence at protein level"/>
<reference key="1">
    <citation type="journal article" date="1996" name="Science">
        <title>Complete genome sequence of the methanogenic archaeon, Methanococcus jannaschii.</title>
        <authorList>
            <person name="Bult C.J."/>
            <person name="White O."/>
            <person name="Olsen G.J."/>
            <person name="Zhou L."/>
            <person name="Fleischmann R.D."/>
            <person name="Sutton G.G."/>
            <person name="Blake J.A."/>
            <person name="FitzGerald L.M."/>
            <person name="Clayton R.A."/>
            <person name="Gocayne J.D."/>
            <person name="Kerlavage A.R."/>
            <person name="Dougherty B.A."/>
            <person name="Tomb J.-F."/>
            <person name="Adams M.D."/>
            <person name="Reich C.I."/>
            <person name="Overbeek R."/>
            <person name="Kirkness E.F."/>
            <person name="Weinstock K.G."/>
            <person name="Merrick J.M."/>
            <person name="Glodek A."/>
            <person name="Scott J.L."/>
            <person name="Geoghagen N.S.M."/>
            <person name="Weidman J.F."/>
            <person name="Fuhrmann J.L."/>
            <person name="Nguyen D."/>
            <person name="Utterback T.R."/>
            <person name="Kelley J.M."/>
            <person name="Peterson J.D."/>
            <person name="Sadow P.W."/>
            <person name="Hanna M.C."/>
            <person name="Cotton M.D."/>
            <person name="Roberts K.M."/>
            <person name="Hurst M.A."/>
            <person name="Kaine B.P."/>
            <person name="Borodovsky M."/>
            <person name="Klenk H.-P."/>
            <person name="Fraser C.M."/>
            <person name="Smith H.O."/>
            <person name="Woese C.R."/>
            <person name="Venter J.C."/>
        </authorList>
    </citation>
    <scope>NUCLEOTIDE SEQUENCE [LARGE SCALE GENOMIC DNA]</scope>
    <source>
        <strain>ATCC 43067 / DSM 2661 / JAL-1 / JCM 10045 / NBRC 100440</strain>
    </source>
</reference>
<reference key="2">
    <citation type="journal article" date="2000" name="J. Bacteriol.">
        <title>Identification of an archaeal 2-hydroxy acid dehydrogenase catalyzing reactions involved in coenzyme biosynthesis in methanoarchaea.</title>
        <authorList>
            <person name="Graupner M."/>
            <person name="Xu H."/>
            <person name="White R.H."/>
        </authorList>
    </citation>
    <scope>FUNCTION AS MALATE/SULFOLACTATE DEHYDROGENASE</scope>
    <scope>CATALYTIC ACTIVITY</scope>
    <scope>BIOPHYSICOCHEMICAL PROPERTIES</scope>
</reference>
<reference key="3">
    <citation type="journal article" date="2000" name="Mol. Microbiol.">
        <title>The putative L-lactate dehydrogenase from Methanococcus jannaschii is an NADPH-dependent L-malate dehydrogenase.</title>
        <authorList>
            <person name="Madern D."/>
        </authorList>
    </citation>
    <scope>FUNCTION AS A MALATE DEHYDROGENASE</scope>
    <scope>CATALYTIC ACTIVITY</scope>
    <scope>BIOPHYSICOCHEMICAL PROPERTIES</scope>
    <scope>SUBUNIT</scope>
</reference>
<reference key="4">
    <citation type="journal article" date="2001" name="Biochemistry">
        <title>Differences in the oligomeric states of the LDH-like L-MalDH from the hyperthermophilic archaea Methanococcus jannaschii and Archaeoglobus fulgidus.</title>
        <authorList>
            <person name="Madern D."/>
            <person name="Ebel C."/>
            <person name="Dale H.A."/>
            <person name="Lien T."/>
            <person name="Steen I.H."/>
            <person name="Birkeland N.-K."/>
            <person name="Zaccai G."/>
        </authorList>
    </citation>
    <scope>SUBUNIT</scope>
</reference>
<reference key="5">
    <citation type="journal article" date="2009" name="Biochim. Biophys. Acta">
        <title>Refolding, characterization and crystal structure of (S)-malate dehydrogenase from the hyperthermophilic archaeon Aeropyrum pernix.</title>
        <authorList>
            <person name="Kawakami R."/>
            <person name="Sakuraba H."/>
            <person name="Goda S."/>
            <person name="Tsuge H."/>
            <person name="Ohshima T."/>
        </authorList>
    </citation>
    <scope>FUNCTION</scope>
    <scope>CATALYTIC ACTIVITY</scope>
    <scope>BIOPHYSICOCHEMICAL PROPERTIES</scope>
</reference>
<reference key="6">
    <citation type="journal article" date="2001" name="J. Mol. Biol.">
        <title>Crystal structure of the MJ0490 gene product of the hyperthermophilic archaebacterium Methanococcus jannaschii, a novel member of the lactate/malate family of dehydrogenases.</title>
        <authorList>
            <person name="Lee B.I."/>
            <person name="Chang C."/>
            <person name="Cho S.-J."/>
            <person name="Eom S.H."/>
            <person name="Kim K.K."/>
            <person name="Yu Y.G."/>
            <person name="Suh S.W."/>
        </authorList>
    </citation>
    <scope>X-RAY CRYSTALLOGRAPHY (1.9 ANGSTROMS) IN COMPLEX WITH NADP</scope>
    <scope>SUBUNIT</scope>
</reference>
<sequence>MKVTIIGASGRVGSATALLLAKEPFMKDLVLIGREHSINKLEGLREDIYDALAGTRSDANIYVESDENLRIIDESDVVIITSGVPRKEGMSRMDLAKTNAKIVGKYAKKIAEICDTKIFVITNPVDVMTYKALVDSKFERNQVFGLGTHLDSLRFKVAIAKFFGVHIDEVRTRIIGEHGDSMVPLLSATSIGGIPIQKFERFKELPIDEIIEDVKTKGEQIIRLKGGSEFGPAAAILNVVRCIVNNEKRLLTLSAYVDGEFDGIRDVCIGVPVKIGRDGIEEVVSIELDKDEIIAFRKSAEIIKKYCEEVKNL</sequence>
<evidence type="ECO:0000250" key="1">
    <source>
        <dbReference type="UniProtKB" id="P61889"/>
    </source>
</evidence>
<evidence type="ECO:0000269" key="2">
    <source>
    </source>
</evidence>
<evidence type="ECO:0000269" key="3">
    <source>
    </source>
</evidence>
<evidence type="ECO:0000269" key="4">
    <source>
    </source>
</evidence>
<evidence type="ECO:0000269" key="5">
    <source>
    </source>
</evidence>
<evidence type="ECO:0000269" key="6">
    <source>
    </source>
</evidence>
<evidence type="ECO:0000303" key="7">
    <source>
    </source>
</evidence>
<evidence type="ECO:0000305" key="8"/>
<evidence type="ECO:0007829" key="9">
    <source>
        <dbReference type="PDB" id="1HYE"/>
    </source>
</evidence>
<evidence type="ECO:0007829" key="10">
    <source>
        <dbReference type="PDB" id="1HYG"/>
    </source>
</evidence>
<name>MDH_METJA</name>
<feature type="chain" id="PRO_0000113485" description="L-2-hydroxycarboxylate dehydrogenase (NAD(P)(+))">
    <location>
        <begin position="1"/>
        <end position="313"/>
    </location>
</feature>
<feature type="active site" description="Proton acceptor" evidence="1">
    <location>
        <position position="178"/>
    </location>
</feature>
<feature type="binding site" evidence="4">
    <location>
        <begin position="7"/>
        <end position="13"/>
    </location>
    <ligand>
        <name>NADP(+)</name>
        <dbReference type="ChEBI" id="CHEBI:58349"/>
    </ligand>
</feature>
<feature type="binding site" evidence="4">
    <location>
        <begin position="34"/>
        <end position="37"/>
    </location>
    <ligand>
        <name>NADP(+)</name>
        <dbReference type="ChEBI" id="CHEBI:58349"/>
    </ligand>
</feature>
<feature type="binding site" evidence="1">
    <location>
        <position position="86"/>
    </location>
    <ligand>
        <name>substrate</name>
    </ligand>
</feature>
<feature type="binding site" evidence="1">
    <location>
        <position position="92"/>
    </location>
    <ligand>
        <name>substrate</name>
    </ligand>
</feature>
<feature type="binding site" evidence="4">
    <location>
        <position position="99"/>
    </location>
    <ligand>
        <name>NADP(+)</name>
        <dbReference type="ChEBI" id="CHEBI:58349"/>
    </ligand>
</feature>
<feature type="binding site" evidence="4">
    <location>
        <begin position="121"/>
        <end position="123"/>
    </location>
    <ligand>
        <name>NADP(+)</name>
        <dbReference type="ChEBI" id="CHEBI:58349"/>
    </ligand>
</feature>
<feature type="binding site" evidence="1">
    <location>
        <position position="123"/>
    </location>
    <ligand>
        <name>substrate</name>
    </ligand>
</feature>
<feature type="binding site" evidence="1">
    <location>
        <position position="154"/>
    </location>
    <ligand>
        <name>substrate</name>
    </ligand>
</feature>
<feature type="strand" evidence="9">
    <location>
        <begin position="2"/>
        <end position="6"/>
    </location>
</feature>
<feature type="turn" evidence="9">
    <location>
        <begin position="7"/>
        <end position="9"/>
    </location>
</feature>
<feature type="helix" evidence="9">
    <location>
        <begin position="11"/>
        <end position="21"/>
    </location>
</feature>
<feature type="strand" evidence="9">
    <location>
        <begin position="28"/>
        <end position="33"/>
    </location>
</feature>
<feature type="helix" evidence="9">
    <location>
        <begin position="35"/>
        <end position="37"/>
    </location>
</feature>
<feature type="helix" evidence="9">
    <location>
        <begin position="38"/>
        <end position="52"/>
    </location>
</feature>
<feature type="strand" evidence="9">
    <location>
        <begin position="60"/>
        <end position="65"/>
    </location>
</feature>
<feature type="helix" evidence="9">
    <location>
        <begin position="69"/>
        <end position="72"/>
    </location>
</feature>
<feature type="strand" evidence="9">
    <location>
        <begin position="76"/>
        <end position="80"/>
    </location>
</feature>
<feature type="helix" evidence="9">
    <location>
        <begin position="92"/>
        <end position="113"/>
    </location>
</feature>
<feature type="strand" evidence="9">
    <location>
        <begin position="117"/>
        <end position="120"/>
    </location>
</feature>
<feature type="strand" evidence="9">
    <location>
        <begin position="122"/>
        <end position="124"/>
    </location>
</feature>
<feature type="helix" evidence="9">
    <location>
        <begin position="125"/>
        <end position="136"/>
    </location>
</feature>
<feature type="strand" evidence="9">
    <location>
        <begin position="142"/>
        <end position="145"/>
    </location>
</feature>
<feature type="helix" evidence="9">
    <location>
        <begin position="149"/>
        <end position="163"/>
    </location>
</feature>
<feature type="helix" evidence="9">
    <location>
        <begin position="167"/>
        <end position="169"/>
    </location>
</feature>
<feature type="strand" evidence="9">
    <location>
        <begin position="174"/>
        <end position="176"/>
    </location>
</feature>
<feature type="strand" evidence="9">
    <location>
        <begin position="182"/>
        <end position="184"/>
    </location>
</feature>
<feature type="helix" evidence="9">
    <location>
        <begin position="186"/>
        <end position="188"/>
    </location>
</feature>
<feature type="helix" evidence="9">
    <location>
        <begin position="196"/>
        <end position="198"/>
    </location>
</feature>
<feature type="helix" evidence="9">
    <location>
        <begin position="200"/>
        <end position="204"/>
    </location>
</feature>
<feature type="helix" evidence="9">
    <location>
        <begin position="207"/>
        <end position="217"/>
    </location>
</feature>
<feature type="helix" evidence="10">
    <location>
        <begin position="219"/>
        <end position="222"/>
    </location>
</feature>
<feature type="strand" evidence="10">
    <location>
        <begin position="225"/>
        <end position="227"/>
    </location>
</feature>
<feature type="helix" evidence="9">
    <location>
        <begin position="232"/>
        <end position="244"/>
    </location>
</feature>
<feature type="strand" evidence="9">
    <location>
        <begin position="249"/>
        <end position="263"/>
    </location>
</feature>
<feature type="strand" evidence="9">
    <location>
        <begin position="265"/>
        <end position="276"/>
    </location>
</feature>
<feature type="strand" evidence="9">
    <location>
        <begin position="279"/>
        <end position="283"/>
    </location>
</feature>
<feature type="helix" evidence="9">
    <location>
        <begin position="290"/>
        <end position="310"/>
    </location>
</feature>
<accession>Q60176</accession>